<dbReference type="EC" id="2.1.1.33" evidence="2"/>
<dbReference type="EMBL" id="CR848038">
    <property type="protein sequence ID" value="CAH64190.1"/>
    <property type="molecule type" value="Genomic_DNA"/>
</dbReference>
<dbReference type="RefSeq" id="WP_011097308.1">
    <property type="nucleotide sequence ID" value="NC_004552.2"/>
</dbReference>
<dbReference type="SMR" id="Q5L5A2"/>
<dbReference type="KEGG" id="cab:CAB743"/>
<dbReference type="eggNOG" id="COG0220">
    <property type="taxonomic scope" value="Bacteria"/>
</dbReference>
<dbReference type="HOGENOM" id="CLU_050910_2_0_0"/>
<dbReference type="OrthoDB" id="9802090at2"/>
<dbReference type="UniPathway" id="UPA00989"/>
<dbReference type="Proteomes" id="UP000001012">
    <property type="component" value="Chromosome"/>
</dbReference>
<dbReference type="GO" id="GO:0043527">
    <property type="term" value="C:tRNA methyltransferase complex"/>
    <property type="evidence" value="ECO:0007669"/>
    <property type="project" value="TreeGrafter"/>
</dbReference>
<dbReference type="GO" id="GO:0008176">
    <property type="term" value="F:tRNA (guanine(46)-N7)-methyltransferase activity"/>
    <property type="evidence" value="ECO:0007669"/>
    <property type="project" value="UniProtKB-UniRule"/>
</dbReference>
<dbReference type="Gene3D" id="3.40.50.150">
    <property type="entry name" value="Vaccinia Virus protein VP39"/>
    <property type="match status" value="1"/>
</dbReference>
<dbReference type="HAMAP" id="MF_01057">
    <property type="entry name" value="tRNA_methyltr_TrmB"/>
    <property type="match status" value="1"/>
</dbReference>
<dbReference type="InterPro" id="IPR029063">
    <property type="entry name" value="SAM-dependent_MTases_sf"/>
</dbReference>
<dbReference type="InterPro" id="IPR003358">
    <property type="entry name" value="tRNA_(Gua-N-7)_MeTrfase_Trmb"/>
</dbReference>
<dbReference type="InterPro" id="IPR055361">
    <property type="entry name" value="tRNA_methyltr_TrmB_bact"/>
</dbReference>
<dbReference type="NCBIfam" id="TIGR00091">
    <property type="entry name" value="tRNA (guanosine(46)-N7)-methyltransferase TrmB"/>
    <property type="match status" value="1"/>
</dbReference>
<dbReference type="PANTHER" id="PTHR23417">
    <property type="entry name" value="3-DEOXY-D-MANNO-OCTULOSONIC-ACID TRANSFERASE/TRNA GUANINE-N 7 - -METHYLTRANSFERASE"/>
    <property type="match status" value="1"/>
</dbReference>
<dbReference type="PANTHER" id="PTHR23417:SF14">
    <property type="entry name" value="PENTACOTRIPEPTIDE-REPEAT REGION OF PRORP DOMAIN-CONTAINING PROTEIN"/>
    <property type="match status" value="1"/>
</dbReference>
<dbReference type="Pfam" id="PF02390">
    <property type="entry name" value="Methyltransf_4"/>
    <property type="match status" value="1"/>
</dbReference>
<dbReference type="SUPFAM" id="SSF53335">
    <property type="entry name" value="S-adenosyl-L-methionine-dependent methyltransferases"/>
    <property type="match status" value="1"/>
</dbReference>
<dbReference type="PROSITE" id="PS51625">
    <property type="entry name" value="SAM_MT_TRMB"/>
    <property type="match status" value="1"/>
</dbReference>
<protein>
    <recommendedName>
        <fullName evidence="2">tRNA (guanine-N(7)-)-methyltransferase</fullName>
        <ecNumber evidence="2">2.1.1.33</ecNumber>
    </recommendedName>
    <alternativeName>
        <fullName evidence="2">tRNA (guanine(46)-N(7))-methyltransferase</fullName>
    </alternativeName>
    <alternativeName>
        <fullName evidence="2">tRNA(m7G46)-methyltransferase</fullName>
    </alternativeName>
</protein>
<keyword id="KW-0489">Methyltransferase</keyword>
<keyword id="KW-0949">S-adenosyl-L-methionine</keyword>
<keyword id="KW-0808">Transferase</keyword>
<keyword id="KW-0819">tRNA processing</keyword>
<reference key="1">
    <citation type="journal article" date="2005" name="Genome Res.">
        <title>The Chlamydophila abortus genome sequence reveals an array of variable proteins that contribute to interspecies variation.</title>
        <authorList>
            <person name="Thomson N.R."/>
            <person name="Yeats C."/>
            <person name="Bell K."/>
            <person name="Holden M.T.G."/>
            <person name="Bentley S.D."/>
            <person name="Livingstone M."/>
            <person name="Cerdeno-Tarraga A.-M."/>
            <person name="Harris B."/>
            <person name="Doggett J."/>
            <person name="Ormond D."/>
            <person name="Mungall K."/>
            <person name="Clarke K."/>
            <person name="Feltwell T."/>
            <person name="Hance Z."/>
            <person name="Sanders M."/>
            <person name="Quail M.A."/>
            <person name="Price C."/>
            <person name="Barrell B.G."/>
            <person name="Parkhill J."/>
            <person name="Longbottom D."/>
        </authorList>
    </citation>
    <scope>NUCLEOTIDE SEQUENCE [LARGE SCALE GENOMIC DNA]</scope>
    <source>
        <strain>DSM 27085 / S26/3</strain>
    </source>
</reference>
<accession>Q5L5A2</accession>
<organism>
    <name type="scientific">Chlamydia abortus (strain DSM 27085 / S26/3)</name>
    <name type="common">Chlamydophila abortus</name>
    <dbReference type="NCBI Taxonomy" id="218497"/>
    <lineage>
        <taxon>Bacteria</taxon>
        <taxon>Pseudomonadati</taxon>
        <taxon>Chlamydiota</taxon>
        <taxon>Chlamydiia</taxon>
        <taxon>Chlamydiales</taxon>
        <taxon>Chlamydiaceae</taxon>
        <taxon>Chlamydia/Chlamydophila group</taxon>
        <taxon>Chlamydia</taxon>
    </lineage>
</organism>
<name>TRMB_CHLAB</name>
<sequence length="224" mass="27042">MKPQDLKAPFFGEERKTQIKDDVLYIPEHYFKHGQFEMPSWEEFFGNNHPIFCELCSGNGDWVVAQANKNPNMNWIAVEKRFDRVRKIWSKMHNSQVRNLRIVCGEAQTFFRHYIQNEVIQRIVVNFPDPWPKSRHRKHRLFQYEFMNDIVRVLVDSGIIILATDDKNYLLQAIKIMQQRLLPKLEEPYYCKMLENYGDSWFERLWRSKGQEIFYTEFVKKVGI</sequence>
<feature type="chain" id="PRO_0000229160" description="tRNA (guanine-N(7)-)-methyltransferase">
    <location>
        <begin position="1"/>
        <end position="224"/>
    </location>
</feature>
<feature type="active site" evidence="1">
    <location>
        <position position="129"/>
    </location>
</feature>
<feature type="binding site" evidence="2">
    <location>
        <position position="54"/>
    </location>
    <ligand>
        <name>S-adenosyl-L-methionine</name>
        <dbReference type="ChEBI" id="CHEBI:59789"/>
    </ligand>
</feature>
<feature type="binding site" evidence="2">
    <location>
        <position position="79"/>
    </location>
    <ligand>
        <name>S-adenosyl-L-methionine</name>
        <dbReference type="ChEBI" id="CHEBI:59789"/>
    </ligand>
</feature>
<feature type="binding site" evidence="2">
    <location>
        <position position="106"/>
    </location>
    <ligand>
        <name>S-adenosyl-L-methionine</name>
        <dbReference type="ChEBI" id="CHEBI:59789"/>
    </ligand>
</feature>
<feature type="binding site" evidence="2">
    <location>
        <position position="129"/>
    </location>
    <ligand>
        <name>S-adenosyl-L-methionine</name>
        <dbReference type="ChEBI" id="CHEBI:59789"/>
    </ligand>
</feature>
<feature type="binding site" evidence="2">
    <location>
        <position position="133"/>
    </location>
    <ligand>
        <name>substrate</name>
    </ligand>
</feature>
<feature type="binding site" evidence="2">
    <location>
        <position position="165"/>
    </location>
    <ligand>
        <name>substrate</name>
    </ligand>
</feature>
<evidence type="ECO:0000250" key="1"/>
<evidence type="ECO:0000255" key="2">
    <source>
        <dbReference type="HAMAP-Rule" id="MF_01057"/>
    </source>
</evidence>
<gene>
    <name evidence="2" type="primary">trmB</name>
    <name type="ordered locus">CAB743</name>
</gene>
<comment type="function">
    <text evidence="2">Catalyzes the formation of N(7)-methylguanine at position 46 (m7G46) in tRNA.</text>
</comment>
<comment type="catalytic activity">
    <reaction evidence="2">
        <text>guanosine(46) in tRNA + S-adenosyl-L-methionine = N(7)-methylguanosine(46) in tRNA + S-adenosyl-L-homocysteine</text>
        <dbReference type="Rhea" id="RHEA:42708"/>
        <dbReference type="Rhea" id="RHEA-COMP:10188"/>
        <dbReference type="Rhea" id="RHEA-COMP:10189"/>
        <dbReference type="ChEBI" id="CHEBI:57856"/>
        <dbReference type="ChEBI" id="CHEBI:59789"/>
        <dbReference type="ChEBI" id="CHEBI:74269"/>
        <dbReference type="ChEBI" id="CHEBI:74480"/>
        <dbReference type="EC" id="2.1.1.33"/>
    </reaction>
</comment>
<comment type="pathway">
    <text evidence="2">tRNA modification; N(7)-methylguanine-tRNA biosynthesis.</text>
</comment>
<comment type="similarity">
    <text evidence="2">Belongs to the class I-like SAM-binding methyltransferase superfamily. TrmB family.</text>
</comment>
<proteinExistence type="inferred from homology"/>